<comment type="function">
    <text evidence="1">Iron-storage protein, plays a role in protection against oxidative stress.</text>
</comment>
<comment type="cofactor">
    <cofactor evidence="2">
        <name>heme b</name>
        <dbReference type="ChEBI" id="CHEBI:60344"/>
    </cofactor>
    <text evidence="2">Binds 1 heme b (iron(II)-protoporphyrin IX) group per dimer.</text>
</comment>
<comment type="subunit">
    <text evidence="2">Heterooligomer of 24 subunits, arranged as 12 dimers, that are packed together to form an approximately spherical molecule with a central cavity, in which large amounts of iron can be deposited.</text>
</comment>
<comment type="similarity">
    <text evidence="4">Belongs to the bacterioferritin family.</text>
</comment>
<name>BFRB_NEIMB</name>
<keyword id="KW-0349">Heme</keyword>
<keyword id="KW-0408">Iron</keyword>
<keyword id="KW-0409">Iron storage</keyword>
<keyword id="KW-0479">Metal-binding</keyword>
<keyword id="KW-1185">Reference proteome</keyword>
<proteinExistence type="inferred from homology"/>
<accession>P63700</accession>
<accession>P56999</accession>
<evidence type="ECO:0000250" key="1">
    <source>
        <dbReference type="UniProtKB" id="P77914"/>
    </source>
</evidence>
<evidence type="ECO:0000250" key="2">
    <source>
        <dbReference type="UniProtKB" id="Q9HY79"/>
    </source>
</evidence>
<evidence type="ECO:0000255" key="3">
    <source>
        <dbReference type="PROSITE-ProRule" id="PRU00085"/>
    </source>
</evidence>
<evidence type="ECO:0000305" key="4"/>
<gene>
    <name type="primary">bfrB</name>
    <name type="ordered locus">NMB1206</name>
</gene>
<sequence>MKGDRLVIRELNKNLGLLLVTINQYFLHARILKNWGFEELGEHFFKQSIVEMKAADDLIERILFLEGLPNLQELGKLLIGESTEEIIACDLTKEQEKHEALLAAIATAEAQQDYVSRDLLEKQKDTNEEHIDWLETQQELIGKIGLPNYLQTAAQED</sequence>
<feature type="chain" id="PRO_0000192608" description="Bacterioferritin B">
    <location>
        <begin position="1"/>
        <end position="157"/>
    </location>
</feature>
<feature type="domain" description="Ferritin-like diiron" evidence="3">
    <location>
        <begin position="1"/>
        <end position="145"/>
    </location>
</feature>
<feature type="binding site" evidence="3">
    <location>
        <position position="51"/>
    </location>
    <ligand>
        <name>Fe cation</name>
        <dbReference type="ChEBI" id="CHEBI:24875"/>
    </ligand>
</feature>
<feature type="binding site" description="axial binding residue" evidence="3">
    <location>
        <position position="52"/>
    </location>
    <ligand>
        <name>heme b</name>
        <dbReference type="ChEBI" id="CHEBI:60344"/>
        <note>ligand shared between dimeric partners</note>
    </ligand>
    <ligandPart>
        <name>Fe</name>
        <dbReference type="ChEBI" id="CHEBI:18248"/>
    </ligandPart>
</feature>
<feature type="binding site" evidence="3">
    <location>
        <position position="94"/>
    </location>
    <ligand>
        <name>Fe cation</name>
        <dbReference type="ChEBI" id="CHEBI:24875"/>
    </ligand>
</feature>
<feature type="binding site" evidence="3">
    <location>
        <position position="130"/>
    </location>
    <ligand>
        <name>Fe cation</name>
        <dbReference type="ChEBI" id="CHEBI:24875"/>
    </ligand>
</feature>
<organism>
    <name type="scientific">Neisseria meningitidis serogroup B (strain ATCC BAA-335 / MC58)</name>
    <dbReference type="NCBI Taxonomy" id="122586"/>
    <lineage>
        <taxon>Bacteria</taxon>
        <taxon>Pseudomonadati</taxon>
        <taxon>Pseudomonadota</taxon>
        <taxon>Betaproteobacteria</taxon>
        <taxon>Neisseriales</taxon>
        <taxon>Neisseriaceae</taxon>
        <taxon>Neisseria</taxon>
    </lineage>
</organism>
<reference key="1">
    <citation type="journal article" date="2000" name="Science">
        <title>Complete genome sequence of Neisseria meningitidis serogroup B strain MC58.</title>
        <authorList>
            <person name="Tettelin H."/>
            <person name="Saunders N.J."/>
            <person name="Heidelberg J.F."/>
            <person name="Jeffries A.C."/>
            <person name="Nelson K.E."/>
            <person name="Eisen J.A."/>
            <person name="Ketchum K.A."/>
            <person name="Hood D.W."/>
            <person name="Peden J.F."/>
            <person name="Dodson R.J."/>
            <person name="Nelson W.C."/>
            <person name="Gwinn M.L."/>
            <person name="DeBoy R.T."/>
            <person name="Peterson J.D."/>
            <person name="Hickey E.K."/>
            <person name="Haft D.H."/>
            <person name="Salzberg S.L."/>
            <person name="White O."/>
            <person name="Fleischmann R.D."/>
            <person name="Dougherty B.A."/>
            <person name="Mason T.M."/>
            <person name="Ciecko A."/>
            <person name="Parksey D.S."/>
            <person name="Blair E."/>
            <person name="Cittone H."/>
            <person name="Clark E.B."/>
            <person name="Cotton M.D."/>
            <person name="Utterback T.R."/>
            <person name="Khouri H.M."/>
            <person name="Qin H."/>
            <person name="Vamathevan J.J."/>
            <person name="Gill J."/>
            <person name="Scarlato V."/>
            <person name="Masignani V."/>
            <person name="Pizza M."/>
            <person name="Grandi G."/>
            <person name="Sun L."/>
            <person name="Smith H.O."/>
            <person name="Fraser C.M."/>
            <person name="Moxon E.R."/>
            <person name="Rappuoli R."/>
            <person name="Venter J.C."/>
        </authorList>
    </citation>
    <scope>NUCLEOTIDE SEQUENCE [LARGE SCALE GENOMIC DNA]</scope>
    <source>
        <strain>ATCC BAA-335 / MC58</strain>
    </source>
</reference>
<protein>
    <recommendedName>
        <fullName>Bacterioferritin B</fullName>
        <shortName>BFR B</shortName>
    </recommendedName>
</protein>
<dbReference type="EMBL" id="AE002098">
    <property type="protein sequence ID" value="AAF41588.1"/>
    <property type="molecule type" value="Genomic_DNA"/>
</dbReference>
<dbReference type="PIR" id="E81110">
    <property type="entry name" value="E81110"/>
</dbReference>
<dbReference type="RefSeq" id="NP_274231.1">
    <property type="nucleotide sequence ID" value="NC_003112.2"/>
</dbReference>
<dbReference type="SMR" id="P63700"/>
<dbReference type="FunCoup" id="P63700">
    <property type="interactions" value="206"/>
</dbReference>
<dbReference type="STRING" id="122586.NMB1206"/>
<dbReference type="PaxDb" id="122586-NMB1206"/>
<dbReference type="KEGG" id="nme:NMB1206"/>
<dbReference type="PATRIC" id="fig|122586.8.peg.1513"/>
<dbReference type="HOGENOM" id="CLU_104506_2_0_4"/>
<dbReference type="InParanoid" id="P63700"/>
<dbReference type="OrthoDB" id="9800505at2"/>
<dbReference type="Proteomes" id="UP000000425">
    <property type="component" value="Chromosome"/>
</dbReference>
<dbReference type="GO" id="GO:0005829">
    <property type="term" value="C:cytosol"/>
    <property type="evidence" value="ECO:0000318"/>
    <property type="project" value="GO_Central"/>
</dbReference>
<dbReference type="GO" id="GO:0008199">
    <property type="term" value="F:ferric iron binding"/>
    <property type="evidence" value="ECO:0007669"/>
    <property type="project" value="InterPro"/>
</dbReference>
<dbReference type="GO" id="GO:0004322">
    <property type="term" value="F:ferroxidase activity"/>
    <property type="evidence" value="ECO:0000318"/>
    <property type="project" value="GO_Central"/>
</dbReference>
<dbReference type="GO" id="GO:0020037">
    <property type="term" value="F:heme binding"/>
    <property type="evidence" value="ECO:0000318"/>
    <property type="project" value="GO_Central"/>
</dbReference>
<dbReference type="GO" id="GO:0005506">
    <property type="term" value="F:iron ion binding"/>
    <property type="evidence" value="ECO:0000318"/>
    <property type="project" value="GO_Central"/>
</dbReference>
<dbReference type="GO" id="GO:0006879">
    <property type="term" value="P:intracellular iron ion homeostasis"/>
    <property type="evidence" value="ECO:0007669"/>
    <property type="project" value="UniProtKB-KW"/>
</dbReference>
<dbReference type="GO" id="GO:0006826">
    <property type="term" value="P:iron ion transport"/>
    <property type="evidence" value="ECO:0007669"/>
    <property type="project" value="InterPro"/>
</dbReference>
<dbReference type="CDD" id="cd00907">
    <property type="entry name" value="Bacterioferritin"/>
    <property type="match status" value="1"/>
</dbReference>
<dbReference type="Gene3D" id="1.20.1260.10">
    <property type="match status" value="1"/>
</dbReference>
<dbReference type="InterPro" id="IPR002024">
    <property type="entry name" value="Bacterioferritin"/>
</dbReference>
<dbReference type="InterPro" id="IPR012347">
    <property type="entry name" value="Ferritin-like"/>
</dbReference>
<dbReference type="InterPro" id="IPR009040">
    <property type="entry name" value="Ferritin-like_diiron"/>
</dbReference>
<dbReference type="InterPro" id="IPR009078">
    <property type="entry name" value="Ferritin-like_SF"/>
</dbReference>
<dbReference type="InterPro" id="IPR008331">
    <property type="entry name" value="Ferritin_DPS_dom"/>
</dbReference>
<dbReference type="NCBIfam" id="TIGR00754">
    <property type="entry name" value="bfr"/>
    <property type="match status" value="1"/>
</dbReference>
<dbReference type="PANTHER" id="PTHR30295">
    <property type="entry name" value="BACTERIOFERRITIN"/>
    <property type="match status" value="1"/>
</dbReference>
<dbReference type="PANTHER" id="PTHR30295:SF0">
    <property type="entry name" value="BACTERIOFERRITIN"/>
    <property type="match status" value="1"/>
</dbReference>
<dbReference type="Pfam" id="PF00210">
    <property type="entry name" value="Ferritin"/>
    <property type="match status" value="1"/>
</dbReference>
<dbReference type="PIRSF" id="PIRSF002560">
    <property type="entry name" value="Bacterioferritin"/>
    <property type="match status" value="1"/>
</dbReference>
<dbReference type="PRINTS" id="PR00601">
    <property type="entry name" value="BACFERRITIN"/>
</dbReference>
<dbReference type="SUPFAM" id="SSF47240">
    <property type="entry name" value="Ferritin-like"/>
    <property type="match status" value="1"/>
</dbReference>
<dbReference type="PROSITE" id="PS00549">
    <property type="entry name" value="BACTERIOFERRITIN"/>
    <property type="match status" value="1"/>
</dbReference>
<dbReference type="PROSITE" id="PS50905">
    <property type="entry name" value="FERRITIN_LIKE"/>
    <property type="match status" value="1"/>
</dbReference>